<comment type="function">
    <text>FixK is a protein that regulates nitrogen fixation genes both positively and negatively. FixK is a positive regulator of NifA expression. FixK may bind DNA at the FNR consensus binding site.</text>
</comment>
<comment type="induction">
    <text>Oxygen is involved in the regulation of fixK expression. FixLJ strongly controls the transcription of fixK.</text>
</comment>
<reference key="1">
    <citation type="journal article" date="1991" name="Mol. Microbiol.">
        <title>Regulation of nitrogen fixation in Azorhizobium caulinodans: identification of a fixK-like gene, a positive regulator of nifA.</title>
        <authorList>
            <person name="Kaminski P.A."/>
            <person name="Mandon K."/>
            <person name="Arigoni F."/>
            <person name="Desnoues N."/>
            <person name="Elmerich C."/>
        </authorList>
    </citation>
    <scope>NUCLEOTIDE SEQUENCE [GENOMIC DNA]</scope>
</reference>
<reference key="2">
    <citation type="submission" date="2007-04" db="EMBL/GenBank/DDBJ databases">
        <title>Complete genome sequence of the nitrogen-fixing bacterium Azorhizobium caulinodans ORS571.</title>
        <authorList>
            <person name="Lee K.B."/>
            <person name="Backer P.D."/>
            <person name="Aono T."/>
            <person name="Liu C.T."/>
            <person name="Suzuki S."/>
            <person name="Suzuki T."/>
            <person name="Kaneko T."/>
            <person name="Yamada M."/>
            <person name="Tabata S."/>
            <person name="Kupfer D.M."/>
            <person name="Najar F.Z."/>
            <person name="Wiley G.B."/>
            <person name="Roe B."/>
            <person name="Binnewies T."/>
            <person name="Ussery D."/>
            <person name="Vereecke D."/>
            <person name="Gevers D."/>
            <person name="Holsters M."/>
            <person name="Oyaizu H."/>
        </authorList>
    </citation>
    <scope>NUCLEOTIDE SEQUENCE [LARGE SCALE GENOMIC DNA]</scope>
    <source>
        <strain>ATCC 43989 / DSM 5975 / JCM 20966 / LMG 6465 / NBRC 14845 / NCIMB 13405 / ORS 571</strain>
    </source>
</reference>
<dbReference type="EMBL" id="X59071">
    <property type="protein sequence ID" value="CAA41794.1"/>
    <property type="molecule type" value="Genomic_DNA"/>
</dbReference>
<dbReference type="EMBL" id="AP009384">
    <property type="protein sequence ID" value="BAF90651.1"/>
    <property type="molecule type" value="Genomic_DNA"/>
</dbReference>
<dbReference type="PIR" id="S16632">
    <property type="entry name" value="S16632"/>
</dbReference>
<dbReference type="RefSeq" id="WP_012173172.1">
    <property type="nucleotide sequence ID" value="NC_009937.1"/>
</dbReference>
<dbReference type="SMR" id="P26488"/>
<dbReference type="STRING" id="438753.AZC_4653"/>
<dbReference type="KEGG" id="azc:AZC_4653"/>
<dbReference type="eggNOG" id="COG0664">
    <property type="taxonomic scope" value="Bacteria"/>
</dbReference>
<dbReference type="HOGENOM" id="CLU_075053_0_1_5"/>
<dbReference type="Proteomes" id="UP000000270">
    <property type="component" value="Chromosome"/>
</dbReference>
<dbReference type="GO" id="GO:0005829">
    <property type="term" value="C:cytosol"/>
    <property type="evidence" value="ECO:0007669"/>
    <property type="project" value="TreeGrafter"/>
</dbReference>
<dbReference type="GO" id="GO:0003677">
    <property type="term" value="F:DNA binding"/>
    <property type="evidence" value="ECO:0007669"/>
    <property type="project" value="UniProtKB-KW"/>
</dbReference>
<dbReference type="GO" id="GO:0003700">
    <property type="term" value="F:DNA-binding transcription factor activity"/>
    <property type="evidence" value="ECO:0007669"/>
    <property type="project" value="InterPro"/>
</dbReference>
<dbReference type="GO" id="GO:0009399">
    <property type="term" value="P:nitrogen fixation"/>
    <property type="evidence" value="ECO:0007669"/>
    <property type="project" value="UniProtKB-KW"/>
</dbReference>
<dbReference type="CDD" id="cd00038">
    <property type="entry name" value="CAP_ED"/>
    <property type="match status" value="1"/>
</dbReference>
<dbReference type="CDD" id="cd00092">
    <property type="entry name" value="HTH_CRP"/>
    <property type="match status" value="1"/>
</dbReference>
<dbReference type="FunFam" id="1.10.10.10:FF:000028">
    <property type="entry name" value="Fumarate/nitrate reduction transcriptional regulator Fnr"/>
    <property type="match status" value="1"/>
</dbReference>
<dbReference type="Gene3D" id="2.60.120.10">
    <property type="entry name" value="Jelly Rolls"/>
    <property type="match status" value="1"/>
</dbReference>
<dbReference type="Gene3D" id="1.10.10.10">
    <property type="entry name" value="Winged helix-like DNA-binding domain superfamily/Winged helix DNA-binding domain"/>
    <property type="match status" value="1"/>
</dbReference>
<dbReference type="InterPro" id="IPR000595">
    <property type="entry name" value="cNMP-bd_dom"/>
</dbReference>
<dbReference type="InterPro" id="IPR018490">
    <property type="entry name" value="cNMP-bd_dom_sf"/>
</dbReference>
<dbReference type="InterPro" id="IPR050397">
    <property type="entry name" value="Env_Response_Regulators"/>
</dbReference>
<dbReference type="InterPro" id="IPR012318">
    <property type="entry name" value="HTH_CRP"/>
</dbReference>
<dbReference type="InterPro" id="IPR014710">
    <property type="entry name" value="RmlC-like_jellyroll"/>
</dbReference>
<dbReference type="InterPro" id="IPR018335">
    <property type="entry name" value="Tscrpt_reg_HTH_Crp-type_CS"/>
</dbReference>
<dbReference type="InterPro" id="IPR036388">
    <property type="entry name" value="WH-like_DNA-bd_sf"/>
</dbReference>
<dbReference type="InterPro" id="IPR036390">
    <property type="entry name" value="WH_DNA-bd_sf"/>
</dbReference>
<dbReference type="PANTHER" id="PTHR24567">
    <property type="entry name" value="CRP FAMILY TRANSCRIPTIONAL REGULATORY PROTEIN"/>
    <property type="match status" value="1"/>
</dbReference>
<dbReference type="PANTHER" id="PTHR24567:SF75">
    <property type="entry name" value="FUMARATE AND NITRATE REDUCTION REGULATORY PROTEIN"/>
    <property type="match status" value="1"/>
</dbReference>
<dbReference type="Pfam" id="PF00027">
    <property type="entry name" value="cNMP_binding"/>
    <property type="match status" value="1"/>
</dbReference>
<dbReference type="Pfam" id="PF13545">
    <property type="entry name" value="HTH_Crp_2"/>
    <property type="match status" value="1"/>
</dbReference>
<dbReference type="PRINTS" id="PR00034">
    <property type="entry name" value="HTHCRP"/>
</dbReference>
<dbReference type="SMART" id="SM00100">
    <property type="entry name" value="cNMP"/>
    <property type="match status" value="1"/>
</dbReference>
<dbReference type="SMART" id="SM00419">
    <property type="entry name" value="HTH_CRP"/>
    <property type="match status" value="1"/>
</dbReference>
<dbReference type="SUPFAM" id="SSF51206">
    <property type="entry name" value="cAMP-binding domain-like"/>
    <property type="match status" value="1"/>
</dbReference>
<dbReference type="SUPFAM" id="SSF46785">
    <property type="entry name" value="Winged helix' DNA-binding domain"/>
    <property type="match status" value="1"/>
</dbReference>
<dbReference type="PROSITE" id="PS00042">
    <property type="entry name" value="HTH_CRP_1"/>
    <property type="match status" value="1"/>
</dbReference>
<dbReference type="PROSITE" id="PS51063">
    <property type="entry name" value="HTH_CRP_2"/>
    <property type="match status" value="1"/>
</dbReference>
<feature type="chain" id="PRO_0000100156" description="Nitrogen fixation regulation protein FixK">
    <location>
        <begin position="1"/>
        <end position="248"/>
    </location>
</feature>
<feature type="domain" description="HTH crp-type" evidence="1">
    <location>
        <begin position="166"/>
        <end position="241"/>
    </location>
</feature>
<feature type="DNA-binding region" description="H-T-H motif" evidence="1">
    <location>
        <begin position="200"/>
        <end position="219"/>
    </location>
</feature>
<proteinExistence type="evidence at transcript level"/>
<gene>
    <name type="primary">fixK</name>
    <name type="ordered locus">AZC_4653</name>
</gene>
<protein>
    <recommendedName>
        <fullName>Nitrogen fixation regulation protein FixK</fullName>
    </recommendedName>
</protein>
<evidence type="ECO:0000255" key="1">
    <source>
        <dbReference type="PROSITE-ProRule" id="PRU00387"/>
    </source>
</evidence>
<name>FIXK_AZOC5</name>
<accession>P26488</accession>
<accession>A8I013</accession>
<sequence length="248" mass="27104">MSIAASVIAHIAPVPAQAYAHPMPSNRWSEMARGVAADESARPAQVVAALGTPAVFARNSEIFGDDQVAENVYVVVSGVVRICKLMGDGRRQIEAFCLPGDAFGWETGERYRFSAEAVSECRLVRVKRSVLFARAGSDPELACALWALSFAELQRAQEHLLLLGRKTAQERVGSFLLDLARRSGTTNASHVTEVTLAMSRQDIADFLGLTIETVSRTLTYLEEQGTISLPSSRRVLLRDRSALRRLDS</sequence>
<keyword id="KW-0238">DNA-binding</keyword>
<keyword id="KW-0535">Nitrogen fixation</keyword>
<keyword id="KW-1185">Reference proteome</keyword>
<keyword id="KW-0804">Transcription</keyword>
<keyword id="KW-0805">Transcription regulation</keyword>
<organism>
    <name type="scientific">Azorhizobium caulinodans (strain ATCC 43989 / DSM 5975 / JCM 20966 / LMG 6465 / NBRC 14845 / NCIMB 13405 / ORS 571)</name>
    <dbReference type="NCBI Taxonomy" id="438753"/>
    <lineage>
        <taxon>Bacteria</taxon>
        <taxon>Pseudomonadati</taxon>
        <taxon>Pseudomonadota</taxon>
        <taxon>Alphaproteobacteria</taxon>
        <taxon>Hyphomicrobiales</taxon>
        <taxon>Xanthobacteraceae</taxon>
        <taxon>Azorhizobium</taxon>
    </lineage>
</organism>